<sequence length="401" mass="45812">MTLHTSPILHSLLDTDAYKLHMQQAVYHHYYDVDVAAEFRCRGDELLGVYADEIAHQVDLMRFLSLNDDEFTYLSSLPFFKPDYLHWLRGFRFNPQQVSIKNNAGKLDIRITGPWREVILWEVPLLAVISEVVHRHRSPNVTAEQALVQLSASLESFRQHSADVDLSQFKLMDFGTRRRFSRDVQQTIVTALQADFPYLIGTSNYDLARRLDITPVGTQAHEWFQAHQQISPTLANSQRAALQMWLREYPSHLGIALTDCITMDAFLRDFDLPFAEAYQGLRHDSGDPVDWGEKAIAHYQRLNIDPMSKTLVFSDNLNLDKALALYRHFGQRVNLVFGIGTRLTCDIPGVKPLNIVIKLVECNGKPVAKLSDSPGKTICQDQNFVCELRKAFDLPRVKKAS</sequence>
<comment type="function">
    <text evidence="1">Catalyzes the synthesis of beta-nicotinate D-ribonucleotide from nicotinate and 5-phospho-D-ribose 1-phosphate at the expense of ATP.</text>
</comment>
<comment type="catalytic activity">
    <reaction evidence="1">
        <text>nicotinate + 5-phospho-alpha-D-ribose 1-diphosphate + ATP + H2O = nicotinate beta-D-ribonucleotide + ADP + phosphate + diphosphate</text>
        <dbReference type="Rhea" id="RHEA:36163"/>
        <dbReference type="ChEBI" id="CHEBI:15377"/>
        <dbReference type="ChEBI" id="CHEBI:30616"/>
        <dbReference type="ChEBI" id="CHEBI:32544"/>
        <dbReference type="ChEBI" id="CHEBI:33019"/>
        <dbReference type="ChEBI" id="CHEBI:43474"/>
        <dbReference type="ChEBI" id="CHEBI:57502"/>
        <dbReference type="ChEBI" id="CHEBI:58017"/>
        <dbReference type="ChEBI" id="CHEBI:456216"/>
        <dbReference type="EC" id="6.3.4.21"/>
    </reaction>
</comment>
<comment type="pathway">
    <text evidence="1">Cofactor biosynthesis; NAD(+) biosynthesis; nicotinate D-ribonucleotide from nicotinate: step 1/1.</text>
</comment>
<comment type="PTM">
    <text evidence="1">Transiently phosphorylated on a His residue during the reaction cycle. Phosphorylation strongly increases the affinity for substrates and increases the rate of nicotinate D-ribonucleotide production. Dephosphorylation regenerates the low-affinity form of the enzyme, leading to product release.</text>
</comment>
<comment type="similarity">
    <text evidence="1">Belongs to the NAPRTase family.</text>
</comment>
<name>PNCB_PECCP</name>
<protein>
    <recommendedName>
        <fullName evidence="1">Nicotinate phosphoribosyltransferase</fullName>
        <shortName evidence="1">NAPRTase</shortName>
        <ecNumber evidence="1">6.3.4.21</ecNumber>
    </recommendedName>
</protein>
<proteinExistence type="inferred from homology"/>
<keyword id="KW-0436">Ligase</keyword>
<keyword id="KW-0597">Phosphoprotein</keyword>
<keyword id="KW-0662">Pyridine nucleotide biosynthesis</keyword>
<feature type="chain" id="PRO_1000212086" description="Nicotinate phosphoribosyltransferase">
    <location>
        <begin position="1"/>
        <end position="401"/>
    </location>
</feature>
<feature type="modified residue" description="Phosphohistidine; by autocatalysis" evidence="1">
    <location>
        <position position="221"/>
    </location>
</feature>
<dbReference type="EC" id="6.3.4.21" evidence="1"/>
<dbReference type="EMBL" id="CP001657">
    <property type="protein sequence ID" value="ACT12827.1"/>
    <property type="molecule type" value="Genomic_DNA"/>
</dbReference>
<dbReference type="RefSeq" id="WP_015840034.1">
    <property type="nucleotide sequence ID" value="NC_012917.1"/>
</dbReference>
<dbReference type="SMR" id="C6DFB8"/>
<dbReference type="STRING" id="561230.PC1_1786"/>
<dbReference type="KEGG" id="pct:PC1_1786"/>
<dbReference type="eggNOG" id="COG1488">
    <property type="taxonomic scope" value="Bacteria"/>
</dbReference>
<dbReference type="HOGENOM" id="CLU_030991_1_0_6"/>
<dbReference type="OrthoDB" id="9771406at2"/>
<dbReference type="UniPathway" id="UPA00253">
    <property type="reaction ID" value="UER00457"/>
</dbReference>
<dbReference type="Proteomes" id="UP000002736">
    <property type="component" value="Chromosome"/>
</dbReference>
<dbReference type="GO" id="GO:0005829">
    <property type="term" value="C:cytosol"/>
    <property type="evidence" value="ECO:0007669"/>
    <property type="project" value="TreeGrafter"/>
</dbReference>
<dbReference type="GO" id="GO:0004516">
    <property type="term" value="F:nicotinate phosphoribosyltransferase activity"/>
    <property type="evidence" value="ECO:0007669"/>
    <property type="project" value="UniProtKB-UniRule"/>
</dbReference>
<dbReference type="GO" id="GO:0034355">
    <property type="term" value="P:NAD biosynthetic process via the salvage pathway"/>
    <property type="evidence" value="ECO:0007669"/>
    <property type="project" value="TreeGrafter"/>
</dbReference>
<dbReference type="CDD" id="cd01401">
    <property type="entry name" value="PncB_like"/>
    <property type="match status" value="1"/>
</dbReference>
<dbReference type="FunFam" id="3.20.140.10:FF:000001">
    <property type="entry name" value="Nicotinate phosphoribosyltransferase"/>
    <property type="match status" value="1"/>
</dbReference>
<dbReference type="Gene3D" id="3.20.140.10">
    <property type="entry name" value="nicotinate phosphoribosyltransferase"/>
    <property type="match status" value="1"/>
</dbReference>
<dbReference type="HAMAP" id="MF_00570">
    <property type="entry name" value="NAPRTase"/>
    <property type="match status" value="1"/>
</dbReference>
<dbReference type="InterPro" id="IPR041525">
    <property type="entry name" value="N/Namide_PRibTrfase"/>
</dbReference>
<dbReference type="InterPro" id="IPR040727">
    <property type="entry name" value="NAPRTase_N"/>
</dbReference>
<dbReference type="InterPro" id="IPR006406">
    <property type="entry name" value="Nic_PRibTrfase"/>
</dbReference>
<dbReference type="InterPro" id="IPR007229">
    <property type="entry name" value="Nic_PRibTrfase-Fam"/>
</dbReference>
<dbReference type="InterPro" id="IPR036068">
    <property type="entry name" value="Nicotinate_pribotase-like_C"/>
</dbReference>
<dbReference type="NCBIfam" id="TIGR01514">
    <property type="entry name" value="NAPRTase"/>
    <property type="match status" value="1"/>
</dbReference>
<dbReference type="NCBIfam" id="NF003704">
    <property type="entry name" value="PRK05321.1"/>
    <property type="match status" value="1"/>
</dbReference>
<dbReference type="PANTHER" id="PTHR11098">
    <property type="entry name" value="NICOTINATE PHOSPHORIBOSYLTRANSFERASE"/>
    <property type="match status" value="1"/>
</dbReference>
<dbReference type="PANTHER" id="PTHR11098:SF1">
    <property type="entry name" value="NICOTINATE PHOSPHORIBOSYLTRANSFERASE"/>
    <property type="match status" value="1"/>
</dbReference>
<dbReference type="Pfam" id="PF04095">
    <property type="entry name" value="NAPRTase"/>
    <property type="match status" value="1"/>
</dbReference>
<dbReference type="Pfam" id="PF17767">
    <property type="entry name" value="NAPRTase_N"/>
    <property type="match status" value="1"/>
</dbReference>
<dbReference type="PIRSF" id="PIRSF000484">
    <property type="entry name" value="NAPRT"/>
    <property type="match status" value="1"/>
</dbReference>
<dbReference type="SUPFAM" id="SSF51690">
    <property type="entry name" value="Nicotinate/Quinolinate PRTase C-terminal domain-like"/>
    <property type="match status" value="1"/>
</dbReference>
<dbReference type="SUPFAM" id="SSF54675">
    <property type="entry name" value="Nicotinate/Quinolinate PRTase N-terminal domain-like"/>
    <property type="match status" value="1"/>
</dbReference>
<accession>C6DFB8</accession>
<evidence type="ECO:0000255" key="1">
    <source>
        <dbReference type="HAMAP-Rule" id="MF_00570"/>
    </source>
</evidence>
<reference key="1">
    <citation type="submission" date="2009-07" db="EMBL/GenBank/DDBJ databases">
        <title>Complete sequence of Pectobacterium carotovorum subsp. carotovorum PC1.</title>
        <authorList>
            <consortium name="US DOE Joint Genome Institute"/>
            <person name="Lucas S."/>
            <person name="Copeland A."/>
            <person name="Lapidus A."/>
            <person name="Glavina del Rio T."/>
            <person name="Tice H."/>
            <person name="Bruce D."/>
            <person name="Goodwin L."/>
            <person name="Pitluck S."/>
            <person name="Munk A.C."/>
            <person name="Brettin T."/>
            <person name="Detter J.C."/>
            <person name="Han C."/>
            <person name="Tapia R."/>
            <person name="Larimer F."/>
            <person name="Land M."/>
            <person name="Hauser L."/>
            <person name="Kyrpides N."/>
            <person name="Mikhailova N."/>
            <person name="Balakrishnan V."/>
            <person name="Glasner J."/>
            <person name="Perna N.T."/>
        </authorList>
    </citation>
    <scope>NUCLEOTIDE SEQUENCE [LARGE SCALE GENOMIC DNA]</scope>
    <source>
        <strain>PC1</strain>
    </source>
</reference>
<organism>
    <name type="scientific">Pectobacterium carotovorum subsp. carotovorum (strain PC1)</name>
    <dbReference type="NCBI Taxonomy" id="561230"/>
    <lineage>
        <taxon>Bacteria</taxon>
        <taxon>Pseudomonadati</taxon>
        <taxon>Pseudomonadota</taxon>
        <taxon>Gammaproteobacteria</taxon>
        <taxon>Enterobacterales</taxon>
        <taxon>Pectobacteriaceae</taxon>
        <taxon>Pectobacterium</taxon>
    </lineage>
</organism>
<gene>
    <name evidence="1" type="primary">pncB</name>
    <name type="ordered locus">PC1_1786</name>
</gene>